<feature type="chain" id="PRO_0000447535" description="Neurotrophic factor BDNF precursor form">
    <location>
        <begin position="1" status="less than"/>
        <end position="114" status="greater than"/>
    </location>
</feature>
<feature type="chain" id="PRO_0000159608" description="Neurotrophic factor BDNF">
    <location>
        <begin position="2"/>
        <end position="114" status="greater than"/>
    </location>
</feature>
<feature type="disulfide bond" evidence="2">
    <location>
        <begin position="14"/>
        <end position="81"/>
    </location>
</feature>
<feature type="disulfide bond" evidence="2">
    <location>
        <begin position="59"/>
        <end position="110"/>
    </location>
</feature>
<feature type="disulfide bond" evidence="2">
    <location>
        <begin position="69"/>
        <end position="112"/>
    </location>
</feature>
<feature type="non-terminal residue">
    <location>
        <position position="1"/>
    </location>
</feature>
<feature type="non-terminal residue">
    <location>
        <position position="114"/>
    </location>
</feature>
<organism>
    <name type="scientific">Macaca mulatta</name>
    <name type="common">Rhesus macaque</name>
    <dbReference type="NCBI Taxonomy" id="9544"/>
    <lineage>
        <taxon>Eukaryota</taxon>
        <taxon>Metazoa</taxon>
        <taxon>Chordata</taxon>
        <taxon>Craniata</taxon>
        <taxon>Vertebrata</taxon>
        <taxon>Euteleostomi</taxon>
        <taxon>Mammalia</taxon>
        <taxon>Eutheria</taxon>
        <taxon>Euarchontoglires</taxon>
        <taxon>Primates</taxon>
        <taxon>Haplorrhini</taxon>
        <taxon>Catarrhini</taxon>
        <taxon>Cercopithecidae</taxon>
        <taxon>Cercopithecinae</taxon>
        <taxon>Macaca</taxon>
    </lineage>
</organism>
<comment type="function">
    <text evidence="1 2">Important signaling molecule that activates signaling cascades downstream of NTRK2 (By similarity). During development, promotes the survival and differentiation of selected neuronal populations of the peripheral and central nervous systems. Participates in axonal growth, pathfinding and in the modulation of dendritic growth and morphology. Major regulator of synaptic transmission and plasticity at adult synapses in many regions of the CNS. The versatility of BDNF is emphasized by its contribution to a range of adaptive neuronal responses including long-term potentiation (LTP), long-term depression (LTD), certain forms of short-term synaptic plasticity, as well as homeostatic regulation of intrinsic neuronal excitability (By similarity).</text>
</comment>
<comment type="function">
    <molecule>Neurotrophic factor BDNF precursor form</molecule>
    <text evidence="1">Important signaling molecule that activates signaling cascades downstream of NTRK2. Activates signaling cascades via the heterodimeric receptor formed by NGFR and SORCS2. Signaling via NGFR and SORCS2 plays a role in synaptic plasticity and long-term depression (LTD). Binding to NGFR and SORCS2 promotes neuronal apoptosis. Promotes neuronal growth cone collapse.</text>
</comment>
<comment type="subunit">
    <text evidence="1 2">Monomers and homodimers (By similarity). Binds to NTRK2/TRKB. Can form heterodimers with other neurotrophin family members, such as NTF3 and NTF4 (in vitro), but the physiological relevance of this is not clear (By similarity). BDNF precursor form: interacts with the heterodimer formed by NGFR and SORCS2. Mature BDNF has much lower affinity for the heterodimer formed by NGFR and SORCS2 (By similarity).</text>
</comment>
<comment type="subcellular location">
    <subcellularLocation>
        <location evidence="2">Secreted</location>
    </subcellularLocation>
</comment>
<comment type="subcellular location">
    <molecule>Neurotrophic factor BDNF precursor form</molecule>
    <subcellularLocation>
        <location evidence="2">Secreted</location>
    </subcellularLocation>
    <text evidence="2">A proportion of BDNF is secreted as immature precursor (proBDNF).</text>
</comment>
<comment type="PTM">
    <molecule>Neurotrophic factor BDNF precursor form</molecule>
    <text evidence="2">N-glycosylated and glycosulfated, contrary to mature BDNF.</text>
</comment>
<comment type="PTM">
    <text evidence="2">Mature BDNF is produced by proteolytic removal of the propeptide, catalyzed by a FURIN family member. In addition, the precursor form is proteolytically cleaved within the propeptide, but this is not an obligatory intermediate for the production of mature BDNF. Can be converted into mature BDNF by plasmin (PLG).</text>
</comment>
<comment type="similarity">
    <text evidence="3">Belongs to the NGF-beta family.</text>
</comment>
<gene>
    <name type="primary">BDNF</name>
</gene>
<protein>
    <recommendedName>
        <fullName evidence="3">Neurotrophic factor BDNF precursor form</fullName>
        <shortName>proBDNF</shortName>
    </recommendedName>
    <alternativeName>
        <fullName>Brain-derived neurotrophic factor</fullName>
    </alternativeName>
    <component>
        <recommendedName>
            <fullName>Neurotrophic factor BDNF</fullName>
        </recommendedName>
    </component>
</protein>
<name>BDNF_MACMU</name>
<proteinExistence type="evidence at transcript level"/>
<evidence type="ECO:0000250" key="1">
    <source>
        <dbReference type="UniProtKB" id="P21237"/>
    </source>
</evidence>
<evidence type="ECO:0000250" key="2">
    <source>
        <dbReference type="UniProtKB" id="P23560"/>
    </source>
</evidence>
<evidence type="ECO:0000305" key="3"/>
<sequence length="114" mass="12956">RHSDPARRGELSVCDSISEWVTAADKKTAVDMSGGTVTVLEKVPVSKGQLKQYFYETKCNPMGYTKEGCRGIDKRHWNSQCRTTQSYVRALTMDSKKRIGWRFIRIDTSCVCTL</sequence>
<dbReference type="EMBL" id="X61475">
    <property type="protein sequence ID" value="CAA43703.1"/>
    <property type="molecule type" value="mRNA"/>
</dbReference>
<dbReference type="PIR" id="I84765">
    <property type="entry name" value="I84765"/>
</dbReference>
<dbReference type="SMR" id="Q06225"/>
<dbReference type="STRING" id="9544.ENSMMUP00000059263"/>
<dbReference type="PaxDb" id="9544-ENSMMUP00000011324"/>
<dbReference type="eggNOG" id="ENOG502QRU8">
    <property type="taxonomic scope" value="Eukaryota"/>
</dbReference>
<dbReference type="HOGENOM" id="CLU_059942_0_0_1"/>
<dbReference type="InParanoid" id="Q06225"/>
<dbReference type="Proteomes" id="UP000006718">
    <property type="component" value="Unassembled WGS sequence"/>
</dbReference>
<dbReference type="GO" id="GO:0005737">
    <property type="term" value="C:cytoplasm"/>
    <property type="evidence" value="ECO:0000250"/>
    <property type="project" value="UniProtKB"/>
</dbReference>
<dbReference type="GO" id="GO:0005576">
    <property type="term" value="C:extracellular region"/>
    <property type="evidence" value="ECO:0007669"/>
    <property type="project" value="UniProtKB-SubCell"/>
</dbReference>
<dbReference type="GO" id="GO:0048471">
    <property type="term" value="C:perinuclear region of cytoplasm"/>
    <property type="evidence" value="ECO:0000250"/>
    <property type="project" value="UniProtKB"/>
</dbReference>
<dbReference type="GO" id="GO:0008083">
    <property type="term" value="F:growth factor activity"/>
    <property type="evidence" value="ECO:0007669"/>
    <property type="project" value="UniProtKB-KW"/>
</dbReference>
<dbReference type="FunFam" id="2.10.90.10:FF:000002">
    <property type="entry name" value="Brain-derived neurotrophic factor"/>
    <property type="match status" value="1"/>
</dbReference>
<dbReference type="Gene3D" id="2.10.90.10">
    <property type="entry name" value="Cystine-knot cytokines"/>
    <property type="match status" value="1"/>
</dbReference>
<dbReference type="InterPro" id="IPR020430">
    <property type="entry name" value="Brain-der_neurotrophic_factor"/>
</dbReference>
<dbReference type="InterPro" id="IPR029034">
    <property type="entry name" value="Cystine-knot_cytokine"/>
</dbReference>
<dbReference type="InterPro" id="IPR020408">
    <property type="entry name" value="Nerve_growth_factor-like"/>
</dbReference>
<dbReference type="InterPro" id="IPR002072">
    <property type="entry name" value="Nerve_growth_factor-rel"/>
</dbReference>
<dbReference type="InterPro" id="IPR019846">
    <property type="entry name" value="Nerve_growth_factor_CS"/>
</dbReference>
<dbReference type="PANTHER" id="PTHR11589:SF3">
    <property type="entry name" value="BRAIN-DERIVED NEUROTROPHIC FACTOR"/>
    <property type="match status" value="1"/>
</dbReference>
<dbReference type="PANTHER" id="PTHR11589">
    <property type="entry name" value="NERVE GROWTH FACTOR NGF -RELATED"/>
    <property type="match status" value="1"/>
</dbReference>
<dbReference type="Pfam" id="PF00243">
    <property type="entry name" value="NGF"/>
    <property type="match status" value="1"/>
</dbReference>
<dbReference type="PRINTS" id="PR01912">
    <property type="entry name" value="BDNFACTOR"/>
</dbReference>
<dbReference type="PRINTS" id="PR00268">
    <property type="entry name" value="NGF"/>
</dbReference>
<dbReference type="SMART" id="SM00140">
    <property type="entry name" value="NGF"/>
    <property type="match status" value="1"/>
</dbReference>
<dbReference type="SUPFAM" id="SSF57501">
    <property type="entry name" value="Cystine-knot cytokines"/>
    <property type="match status" value="1"/>
</dbReference>
<dbReference type="PROSITE" id="PS00248">
    <property type="entry name" value="NGF_1"/>
    <property type="match status" value="1"/>
</dbReference>
<dbReference type="PROSITE" id="PS50270">
    <property type="entry name" value="NGF_2"/>
    <property type="match status" value="1"/>
</dbReference>
<reference key="1">
    <citation type="journal article" date="1991" name="FEBS Lett.">
        <title>Comparison of mammalian, chicken and Xenopus brain-derived neurotrophic factor coding sequences.</title>
        <authorList>
            <person name="Isackson P.J."/>
            <person name="Towner M.D."/>
            <person name="Huntsman M.M."/>
        </authorList>
    </citation>
    <scope>NUCLEOTIDE SEQUENCE [MRNA]</scope>
</reference>
<keyword id="KW-1015">Disulfide bond</keyword>
<keyword id="KW-0339">Growth factor</keyword>
<keyword id="KW-1185">Reference proteome</keyword>
<keyword id="KW-0964">Secreted</keyword>
<accession>Q06225</accession>